<sequence length="206" mass="23477">MEPLASNIQVLLQAAEFLERREREAEHGYASLCPHRSPGPIHRRKKRPPQAPGAQDSGRSVHNELEKRRRAQLKRCLERLKQQMPLGADCARYTTLSLLRRARMHIQKLEDQEQRARQLKERLRSKQQSLQRQLEQLRGLAGAAERERLRADSLDSSGLSSERSDSDQEELEVDVESLVFGGEAELLRGFVAGQEHSYSHGGGAWL</sequence>
<accession>Q9BW11</accession>
<accession>B4E0J1</accession>
<accession>Q53HK1</accession>
<accession>Q7Z4Y0</accession>
<accession>Q8NDJ7</accession>
<accession>Q96ME3</accession>
<gene>
    <name type="primary">MXD3</name>
    <name type="synonym">BHLHC13</name>
    <name type="synonym">MAD3</name>
</gene>
<organism>
    <name type="scientific">Homo sapiens</name>
    <name type="common">Human</name>
    <dbReference type="NCBI Taxonomy" id="9606"/>
    <lineage>
        <taxon>Eukaryota</taxon>
        <taxon>Metazoa</taxon>
        <taxon>Chordata</taxon>
        <taxon>Craniata</taxon>
        <taxon>Vertebrata</taxon>
        <taxon>Euteleostomi</taxon>
        <taxon>Mammalia</taxon>
        <taxon>Eutheria</taxon>
        <taxon>Euarchontoglires</taxon>
        <taxon>Primates</taxon>
        <taxon>Haplorrhini</taxon>
        <taxon>Catarrhini</taxon>
        <taxon>Hominidae</taxon>
        <taxon>Homo</taxon>
    </lineage>
</organism>
<name>MAD3_HUMAN</name>
<comment type="function">
    <text evidence="1">Transcriptional repressor. Binds with MAX to form a sequence-specific DNA-binding protein complex which recognizes the core sequence 5'-CAC[GA]TG-3'. Antagonizes MYC transcriptional activity by competing for MAX and suppresses MYC dependent cell transformation (By similarity).</text>
</comment>
<comment type="subunit">
    <text evidence="1">Efficient DNA binding requires dimerization with another bHLH protein. Binds DNA as a heterodimer with MAX. Interacts with SIN3A AND SIN3B. Interacts with RNF17 (By similarity).</text>
</comment>
<comment type="interaction">
    <interactant intactId="EBI-741574">
        <id>Q9BW11</id>
    </interactant>
    <interactant intactId="EBI-3867333">
        <id>A8MQ03</id>
        <label>CYSRT1</label>
    </interactant>
    <organismsDiffer>false</organismsDiffer>
    <experiments>3</experiments>
</comment>
<comment type="interaction">
    <interactant intactId="EBI-741574">
        <id>Q9BW11</id>
    </interactant>
    <interactant intactId="EBI-948001">
        <id>Q15323</id>
        <label>KRT31</label>
    </interactant>
    <organismsDiffer>false</organismsDiffer>
    <experiments>3</experiments>
</comment>
<comment type="interaction">
    <interactant intactId="EBI-741574">
        <id>Q9BW11</id>
    </interactant>
    <interactant intactId="EBI-11959885">
        <id>Q07627</id>
        <label>KRTAP1-1</label>
    </interactant>
    <organismsDiffer>false</organismsDiffer>
    <experiments>3</experiments>
</comment>
<comment type="interaction">
    <interactant intactId="EBI-741574">
        <id>Q9BW11</id>
    </interactant>
    <interactant intactId="EBI-11749135">
        <id>Q8IUG1</id>
        <label>KRTAP1-3</label>
    </interactant>
    <organismsDiffer>false</organismsDiffer>
    <experiments>3</experiments>
</comment>
<comment type="interaction">
    <interactant intactId="EBI-741574">
        <id>Q9BW11</id>
    </interactant>
    <interactant intactId="EBI-10172290">
        <id>P60409</id>
        <label>KRTAP10-7</label>
    </interactant>
    <organismsDiffer>false</organismsDiffer>
    <experiments>3</experiments>
</comment>
<comment type="interaction">
    <interactant intactId="EBI-741574">
        <id>Q9BW11</id>
    </interactant>
    <interactant intactId="EBI-3957694">
        <id>Q9BYR6</id>
        <label>KRTAP3-3</label>
    </interactant>
    <organismsDiffer>false</organismsDiffer>
    <experiments>3</experiments>
</comment>
<comment type="interaction">
    <interactant intactId="EBI-741574">
        <id>Q9BW11</id>
    </interactant>
    <interactant intactId="EBI-945833">
        <id>Q7Z3S9</id>
        <label>NOTCH2NLA</label>
    </interactant>
    <organismsDiffer>false</organismsDiffer>
    <experiments>4</experiments>
</comment>
<comment type="interaction">
    <interactant intactId="EBI-741574">
        <id>Q9BW11</id>
    </interactant>
    <interactant intactId="EBI-22310682">
        <id>P0DPK4</id>
        <label>NOTCH2NLC</label>
    </interactant>
    <organismsDiffer>false</organismsDiffer>
    <experiments>3</experiments>
</comment>
<comment type="interaction">
    <interactant intactId="EBI-741574">
        <id>Q9BW11</id>
    </interactant>
    <interactant intactId="EBI-347978">
        <id>P37198</id>
        <label>NUP62</label>
    </interactant>
    <organismsDiffer>false</organismsDiffer>
    <experiments>3</experiments>
</comment>
<comment type="interaction">
    <interactant intactId="EBI-741574">
        <id>Q9BW11</id>
    </interactant>
    <interactant intactId="EBI-1105213">
        <id>Q9UBB9</id>
        <label>TFIP11</label>
    </interactant>
    <organismsDiffer>false</organismsDiffer>
    <experiments>4</experiments>
</comment>
<comment type="subcellular location">
    <subcellularLocation>
        <location evidence="2">Nucleus</location>
    </subcellularLocation>
</comment>
<comment type="alternative products">
    <event type="alternative splicing"/>
    <isoform>
        <id>Q9BW11-1</id>
        <name>1</name>
        <sequence type="displayed"/>
    </isoform>
    <isoform>
        <id>Q9BW11-2</id>
        <name>2</name>
        <sequence type="described" ref="VSP_021109"/>
    </isoform>
    <isoform>
        <id>Q9BW11-3</id>
        <name>3</name>
        <sequence type="described" ref="VSP_021110"/>
    </isoform>
    <isoform>
        <id>Q9BW11-4</id>
        <name>4</name>
        <sequence type="described" ref="VSP_057220"/>
    </isoform>
</comment>
<dbReference type="EMBL" id="AF114834">
    <property type="protein sequence ID" value="AAP97233.1"/>
    <property type="molecule type" value="mRNA"/>
</dbReference>
<dbReference type="EMBL" id="AK057034">
    <property type="protein sequence ID" value="BAB71352.1"/>
    <property type="molecule type" value="mRNA"/>
</dbReference>
<dbReference type="EMBL" id="AK303397">
    <property type="protein sequence ID" value="BAG64453.1"/>
    <property type="molecule type" value="mRNA"/>
</dbReference>
<dbReference type="EMBL" id="AK316468">
    <property type="protein sequence ID" value="BAH14839.1"/>
    <property type="molecule type" value="mRNA"/>
</dbReference>
<dbReference type="EMBL" id="AK222579">
    <property type="protein sequence ID" value="BAD96299.1"/>
    <property type="molecule type" value="mRNA"/>
</dbReference>
<dbReference type="EMBL" id="AL833959">
    <property type="protein sequence ID" value="CAD38809.2"/>
    <property type="molecule type" value="mRNA"/>
</dbReference>
<dbReference type="EMBL" id="AC146507">
    <property type="status" value="NOT_ANNOTATED_CDS"/>
    <property type="molecule type" value="Genomic_DNA"/>
</dbReference>
<dbReference type="EMBL" id="BC000745">
    <property type="protein sequence ID" value="AAH00745.1"/>
    <property type="molecule type" value="mRNA"/>
</dbReference>
<dbReference type="CCDS" id="CCDS4416.1">
    <molecule id="Q9BW11-1"/>
</dbReference>
<dbReference type="CCDS" id="CCDS47347.1">
    <molecule id="Q9BW11-3"/>
</dbReference>
<dbReference type="RefSeq" id="NP_001136407.1">
    <molecule id="Q9BW11-3"/>
    <property type="nucleotide sequence ID" value="NM_001142935.2"/>
</dbReference>
<dbReference type="RefSeq" id="NP_001381915.1">
    <molecule id="Q9BW11-1"/>
    <property type="nucleotide sequence ID" value="NM_001394986.1"/>
</dbReference>
<dbReference type="RefSeq" id="NP_112590.1">
    <molecule id="Q9BW11-1"/>
    <property type="nucleotide sequence ID" value="NM_031300.4"/>
</dbReference>
<dbReference type="SMR" id="Q9BW11"/>
<dbReference type="BioGRID" id="123658">
    <property type="interactions" value="40"/>
</dbReference>
<dbReference type="ComplexPortal" id="CPX-2517">
    <property type="entry name" value="MXD3-MAX transcriptional repressor complex"/>
</dbReference>
<dbReference type="FunCoup" id="Q9BW11">
    <property type="interactions" value="310"/>
</dbReference>
<dbReference type="IntAct" id="Q9BW11">
    <property type="interactions" value="33"/>
</dbReference>
<dbReference type="STRING" id="9606.ENSP00000401867"/>
<dbReference type="iPTMnet" id="Q9BW11"/>
<dbReference type="PhosphoSitePlus" id="Q9BW11"/>
<dbReference type="BioMuta" id="MXD3"/>
<dbReference type="DMDM" id="74733390"/>
<dbReference type="jPOST" id="Q9BW11"/>
<dbReference type="MassIVE" id="Q9BW11"/>
<dbReference type="PaxDb" id="9606-ENSP00000401867"/>
<dbReference type="PeptideAtlas" id="Q9BW11"/>
<dbReference type="ProteomicsDB" id="5676"/>
<dbReference type="ProteomicsDB" id="79247">
    <molecule id="Q9BW11-1"/>
</dbReference>
<dbReference type="ProteomicsDB" id="79248">
    <molecule id="Q9BW11-2"/>
</dbReference>
<dbReference type="ProteomicsDB" id="79249">
    <molecule id="Q9BW11-3"/>
</dbReference>
<dbReference type="Pumba" id="Q9BW11"/>
<dbReference type="ABCD" id="Q9BW11">
    <property type="antibodies" value="2 sequenced antibodies"/>
</dbReference>
<dbReference type="Antibodypedia" id="17372">
    <property type="antibodies" value="212 antibodies from 28 providers"/>
</dbReference>
<dbReference type="DNASU" id="83463"/>
<dbReference type="Ensembl" id="ENST00000423571.6">
    <molecule id="Q9BW11-4"/>
    <property type="protein sequence ID" value="ENSP00000389716.2"/>
    <property type="gene ID" value="ENSG00000213347.11"/>
</dbReference>
<dbReference type="Ensembl" id="ENST00000427908.6">
    <molecule id="Q9BW11-3"/>
    <property type="protein sequence ID" value="ENSP00000416921.2"/>
    <property type="gene ID" value="ENSG00000213347.11"/>
</dbReference>
<dbReference type="Ensembl" id="ENST00000439742.7">
    <molecule id="Q9BW11-1"/>
    <property type="protein sequence ID" value="ENSP00000401867.2"/>
    <property type="gene ID" value="ENSG00000213347.11"/>
</dbReference>
<dbReference type="Ensembl" id="ENST00000513063.5">
    <molecule id="Q9BW11-1"/>
    <property type="protein sequence ID" value="ENSP00000421463.1"/>
    <property type="gene ID" value="ENSG00000213347.11"/>
</dbReference>
<dbReference type="GeneID" id="83463"/>
<dbReference type="KEGG" id="hsa:83463"/>
<dbReference type="MANE-Select" id="ENST00000439742.7">
    <property type="protein sequence ID" value="ENSP00000401867.2"/>
    <property type="RefSeq nucleotide sequence ID" value="NM_031300.4"/>
    <property type="RefSeq protein sequence ID" value="NP_112590.1"/>
</dbReference>
<dbReference type="UCSC" id="uc003mga.4">
    <molecule id="Q9BW11-1"/>
    <property type="organism name" value="human"/>
</dbReference>
<dbReference type="AGR" id="HGNC:14008"/>
<dbReference type="CTD" id="83463"/>
<dbReference type="DisGeNET" id="83463"/>
<dbReference type="GeneCards" id="MXD3"/>
<dbReference type="HGNC" id="HGNC:14008">
    <property type="gene designation" value="MXD3"/>
</dbReference>
<dbReference type="HPA" id="ENSG00000213347">
    <property type="expression patterns" value="Tissue enhanced (bone)"/>
</dbReference>
<dbReference type="MIM" id="609450">
    <property type="type" value="gene"/>
</dbReference>
<dbReference type="neXtProt" id="NX_Q9BW11"/>
<dbReference type="OpenTargets" id="ENSG00000213347"/>
<dbReference type="PharmGKB" id="PA134892226"/>
<dbReference type="VEuPathDB" id="HostDB:ENSG00000213347"/>
<dbReference type="eggNOG" id="KOG2483">
    <property type="taxonomic scope" value="Eukaryota"/>
</dbReference>
<dbReference type="GeneTree" id="ENSGT00940000161050"/>
<dbReference type="HOGENOM" id="CLU_882682_0_0_1"/>
<dbReference type="InParanoid" id="Q9BW11"/>
<dbReference type="OMA" id="HTDADHC"/>
<dbReference type="OrthoDB" id="5920083at2759"/>
<dbReference type="PAN-GO" id="Q9BW11">
    <property type="GO annotations" value="3 GO annotations based on evolutionary models"/>
</dbReference>
<dbReference type="PhylomeDB" id="Q9BW11"/>
<dbReference type="TreeFam" id="TF315654"/>
<dbReference type="PathwayCommons" id="Q9BW11"/>
<dbReference type="SignaLink" id="Q9BW11"/>
<dbReference type="SIGNOR" id="Q9BW11"/>
<dbReference type="BioGRID-ORCS" id="83463">
    <property type="hits" value="11 hits in 1173 CRISPR screens"/>
</dbReference>
<dbReference type="CD-CODE" id="B5B9A610">
    <property type="entry name" value="PML body"/>
</dbReference>
<dbReference type="ChiTaRS" id="MXD3">
    <property type="organism name" value="human"/>
</dbReference>
<dbReference type="GenomeRNAi" id="83463"/>
<dbReference type="Pharos" id="Q9BW11">
    <property type="development level" value="Tbio"/>
</dbReference>
<dbReference type="PRO" id="PR:Q9BW11"/>
<dbReference type="Proteomes" id="UP000005640">
    <property type="component" value="Chromosome 5"/>
</dbReference>
<dbReference type="RNAct" id="Q9BW11">
    <property type="molecule type" value="protein"/>
</dbReference>
<dbReference type="Bgee" id="ENSG00000213347">
    <property type="expression patterns" value="Expressed in ventricular zone and 135 other cell types or tissues"/>
</dbReference>
<dbReference type="ExpressionAtlas" id="Q9BW11">
    <property type="expression patterns" value="baseline and differential"/>
</dbReference>
<dbReference type="GO" id="GO:0000785">
    <property type="term" value="C:chromatin"/>
    <property type="evidence" value="ECO:0000247"/>
    <property type="project" value="NTNU_SB"/>
</dbReference>
<dbReference type="GO" id="GO:0090575">
    <property type="term" value="C:RNA polymerase II transcription regulator complex"/>
    <property type="evidence" value="ECO:0007669"/>
    <property type="project" value="Ensembl"/>
</dbReference>
<dbReference type="GO" id="GO:0000981">
    <property type="term" value="F:DNA-binding transcription factor activity, RNA polymerase II-specific"/>
    <property type="evidence" value="ECO:0000247"/>
    <property type="project" value="NTNU_SB"/>
</dbReference>
<dbReference type="GO" id="GO:0001227">
    <property type="term" value="F:DNA-binding transcription repressor activity, RNA polymerase II-specific"/>
    <property type="evidence" value="ECO:0007669"/>
    <property type="project" value="Ensembl"/>
</dbReference>
<dbReference type="GO" id="GO:0046983">
    <property type="term" value="F:protein dimerization activity"/>
    <property type="evidence" value="ECO:0007669"/>
    <property type="project" value="InterPro"/>
</dbReference>
<dbReference type="GO" id="GO:0000978">
    <property type="term" value="F:RNA polymerase II cis-regulatory region sequence-specific DNA binding"/>
    <property type="evidence" value="ECO:0000318"/>
    <property type="project" value="GO_Central"/>
</dbReference>
<dbReference type="GO" id="GO:0006357">
    <property type="term" value="P:regulation of transcription by RNA polymerase II"/>
    <property type="evidence" value="ECO:0000318"/>
    <property type="project" value="GO_Central"/>
</dbReference>
<dbReference type="CDD" id="cd18932">
    <property type="entry name" value="bHLHzip_Mad3"/>
    <property type="match status" value="1"/>
</dbReference>
<dbReference type="FunFam" id="4.10.280.10:FF:000073">
    <property type="entry name" value="MAX dimerization protein 3"/>
    <property type="match status" value="1"/>
</dbReference>
<dbReference type="Gene3D" id="4.10.280.10">
    <property type="entry name" value="Helix-loop-helix DNA-binding domain"/>
    <property type="match status" value="1"/>
</dbReference>
<dbReference type="InterPro" id="IPR011598">
    <property type="entry name" value="bHLH_dom"/>
</dbReference>
<dbReference type="InterPro" id="IPR036638">
    <property type="entry name" value="HLH_DNA-bd_sf"/>
</dbReference>
<dbReference type="PANTHER" id="PTHR11969:SF6">
    <property type="entry name" value="MAX DIMERIZATION PROTEIN 3"/>
    <property type="match status" value="1"/>
</dbReference>
<dbReference type="PANTHER" id="PTHR11969">
    <property type="entry name" value="MAX DIMERIZATION, MAD"/>
    <property type="match status" value="1"/>
</dbReference>
<dbReference type="Pfam" id="PF00010">
    <property type="entry name" value="HLH"/>
    <property type="match status" value="1"/>
</dbReference>
<dbReference type="SMART" id="SM00353">
    <property type="entry name" value="HLH"/>
    <property type="match status" value="1"/>
</dbReference>
<dbReference type="SUPFAM" id="SSF47459">
    <property type="entry name" value="HLH, helix-loop-helix DNA-binding domain"/>
    <property type="match status" value="1"/>
</dbReference>
<dbReference type="PROSITE" id="PS50888">
    <property type="entry name" value="BHLH"/>
    <property type="match status" value="1"/>
</dbReference>
<proteinExistence type="evidence at protein level"/>
<feature type="chain" id="PRO_0000253707" description="Max dimerization protein 3">
    <location>
        <begin position="1"/>
        <end position="206"/>
    </location>
</feature>
<feature type="domain" description="bHLH" evidence="2">
    <location>
        <begin position="57"/>
        <end position="109"/>
    </location>
</feature>
<feature type="region of interest" description="Interaction with SIN3A and SIN3B" evidence="1">
    <location>
        <begin position="8"/>
        <end position="25"/>
    </location>
</feature>
<feature type="region of interest" description="Disordered" evidence="3">
    <location>
        <begin position="25"/>
        <end position="67"/>
    </location>
</feature>
<feature type="region of interest" description="Disordered" evidence="3">
    <location>
        <begin position="146"/>
        <end position="171"/>
    </location>
</feature>
<feature type="splice variant" id="VSP_021109" description="In isoform 2." evidence="5">
    <location>
        <begin position="60"/>
        <end position="68"/>
    </location>
</feature>
<feature type="splice variant" id="VSP_021110" description="In isoform 3." evidence="4">
    <original>EELEVDVESLVFGGEAELLRGFVAGQEHSYSHGGGAWL</original>
    <variation>VLPNENGGTPNHRPTGRGNNISSHH</variation>
    <location>
        <begin position="169"/>
        <end position="206"/>
    </location>
</feature>
<feature type="splice variant" id="VSP_057220" description="In isoform 4." evidence="4">
    <original>EELEVDVESLVFGGEAELLRGFVAGQEHSYSHGGGAWL</original>
    <variation>GECPEAEGLCGPRGEPGLLTGPLPAQRSWRWMWRAWCLGVRPSCCGASSPARSTATRTAAAPGYDVPHPGRASALYSCQAHLPGRSPPQAFRAARSHLLEWTKRTLVWEQVLPKHPAAGCQAGPLEGKGQDSSGPPWTPAGQAAWARAQAFGSAAPKGTGSLLGLFPSWTRPPAFASHKLYSIFIKSLFHNFPSIVLPNENGGTPNHRPTGRGNNISSHH</variation>
    <location>
        <begin position="169"/>
        <end position="206"/>
    </location>
</feature>
<feature type="sequence variant" id="VAR_049546" description="In dbSNP:rs35691394.">
    <original>Q</original>
    <variation>H</variation>
    <location>
        <position position="114"/>
    </location>
</feature>
<feature type="sequence conflict" description="In Ref. 1; AAP97233." evidence="6" ref="1">
    <original>A</original>
    <variation>G</variation>
    <location>
        <position position="88"/>
    </location>
</feature>
<feature type="sequence conflict" description="In Ref. 3; BAD96299." evidence="6" ref="3">
    <original>S</original>
    <variation>G</variation>
    <location>
        <position position="129"/>
    </location>
</feature>
<feature type="sequence conflict" description="In Ref. 1; AAP97233." evidence="6" ref="1">
    <original>LE</original>
    <variation>WM</variation>
    <location>
        <begin position="134"/>
        <end position="135"/>
    </location>
</feature>
<feature type="sequence conflict" description="In Ref. 1; AAP97233." evidence="6" ref="1">
    <original>D</original>
    <variation>N</variation>
    <location>
        <position position="155"/>
    </location>
</feature>
<protein>
    <recommendedName>
        <fullName>Max dimerization protein 3</fullName>
        <shortName>Max dimerizer 3</shortName>
    </recommendedName>
    <alternativeName>
        <fullName>Class C basic helix-loop-helix protein 13</fullName>
        <shortName>bHLHc13</shortName>
    </alternativeName>
    <alternativeName>
        <fullName>Max-associated protein 3</fullName>
    </alternativeName>
    <alternativeName>
        <fullName>Max-interacting transcriptional repressor MAD3</fullName>
    </alternativeName>
    <alternativeName>
        <fullName>Myx</fullName>
    </alternativeName>
</protein>
<evidence type="ECO:0000250" key="1"/>
<evidence type="ECO:0000255" key="2">
    <source>
        <dbReference type="PROSITE-ProRule" id="PRU00981"/>
    </source>
</evidence>
<evidence type="ECO:0000256" key="3">
    <source>
        <dbReference type="SAM" id="MobiDB-lite"/>
    </source>
</evidence>
<evidence type="ECO:0000303" key="4">
    <source>
    </source>
</evidence>
<evidence type="ECO:0000303" key="5">
    <source>
    </source>
</evidence>
<evidence type="ECO:0000305" key="6"/>
<reference key="1">
    <citation type="submission" date="2003-07" db="EMBL/GenBank/DDBJ databases">
        <title>Cloning and sequencing of a new human cDNA homologous to Rattus norvegicus Myx mRNA.</title>
        <authorList>
            <person name="Zhang P.Z."/>
            <person name="Yu L."/>
            <person name="Ding J.B."/>
            <person name="Dai F.Y."/>
            <person name="Fu S.N."/>
            <person name="Zhao S.Y."/>
        </authorList>
    </citation>
    <scope>NUCLEOTIDE SEQUENCE [LARGE SCALE MRNA] (ISOFORM 1)</scope>
</reference>
<reference key="2">
    <citation type="journal article" date="2004" name="Nat. Genet.">
        <title>Complete sequencing and characterization of 21,243 full-length human cDNAs.</title>
        <authorList>
            <person name="Ota T."/>
            <person name="Suzuki Y."/>
            <person name="Nishikawa T."/>
            <person name="Otsuki T."/>
            <person name="Sugiyama T."/>
            <person name="Irie R."/>
            <person name="Wakamatsu A."/>
            <person name="Hayashi K."/>
            <person name="Sato H."/>
            <person name="Nagai K."/>
            <person name="Kimura K."/>
            <person name="Makita H."/>
            <person name="Sekine M."/>
            <person name="Obayashi M."/>
            <person name="Nishi T."/>
            <person name="Shibahara T."/>
            <person name="Tanaka T."/>
            <person name="Ishii S."/>
            <person name="Yamamoto J."/>
            <person name="Saito K."/>
            <person name="Kawai Y."/>
            <person name="Isono Y."/>
            <person name="Nakamura Y."/>
            <person name="Nagahari K."/>
            <person name="Murakami K."/>
            <person name="Yasuda T."/>
            <person name="Iwayanagi T."/>
            <person name="Wagatsuma M."/>
            <person name="Shiratori A."/>
            <person name="Sudo H."/>
            <person name="Hosoiri T."/>
            <person name="Kaku Y."/>
            <person name="Kodaira H."/>
            <person name="Kondo H."/>
            <person name="Sugawara M."/>
            <person name="Takahashi M."/>
            <person name="Kanda K."/>
            <person name="Yokoi T."/>
            <person name="Furuya T."/>
            <person name="Kikkawa E."/>
            <person name="Omura Y."/>
            <person name="Abe K."/>
            <person name="Kamihara K."/>
            <person name="Katsuta N."/>
            <person name="Sato K."/>
            <person name="Tanikawa M."/>
            <person name="Yamazaki M."/>
            <person name="Ninomiya K."/>
            <person name="Ishibashi T."/>
            <person name="Yamashita H."/>
            <person name="Murakawa K."/>
            <person name="Fujimori K."/>
            <person name="Tanai H."/>
            <person name="Kimata M."/>
            <person name="Watanabe M."/>
            <person name="Hiraoka S."/>
            <person name="Chiba Y."/>
            <person name="Ishida S."/>
            <person name="Ono Y."/>
            <person name="Takiguchi S."/>
            <person name="Watanabe S."/>
            <person name="Yosida M."/>
            <person name="Hotuta T."/>
            <person name="Kusano J."/>
            <person name="Kanehori K."/>
            <person name="Takahashi-Fujii A."/>
            <person name="Hara H."/>
            <person name="Tanase T.-O."/>
            <person name="Nomura Y."/>
            <person name="Togiya S."/>
            <person name="Komai F."/>
            <person name="Hara R."/>
            <person name="Takeuchi K."/>
            <person name="Arita M."/>
            <person name="Imose N."/>
            <person name="Musashino K."/>
            <person name="Yuuki H."/>
            <person name="Oshima A."/>
            <person name="Sasaki N."/>
            <person name="Aotsuka S."/>
            <person name="Yoshikawa Y."/>
            <person name="Matsunawa H."/>
            <person name="Ichihara T."/>
            <person name="Shiohata N."/>
            <person name="Sano S."/>
            <person name="Moriya S."/>
            <person name="Momiyama H."/>
            <person name="Satoh N."/>
            <person name="Takami S."/>
            <person name="Terashima Y."/>
            <person name="Suzuki O."/>
            <person name="Nakagawa S."/>
            <person name="Senoh A."/>
            <person name="Mizoguchi H."/>
            <person name="Goto Y."/>
            <person name="Shimizu F."/>
            <person name="Wakebe H."/>
            <person name="Hishigaki H."/>
            <person name="Watanabe T."/>
            <person name="Sugiyama A."/>
            <person name="Takemoto M."/>
            <person name="Kawakami B."/>
            <person name="Yamazaki M."/>
            <person name="Watanabe K."/>
            <person name="Kumagai A."/>
            <person name="Itakura S."/>
            <person name="Fukuzumi Y."/>
            <person name="Fujimori Y."/>
            <person name="Komiyama M."/>
            <person name="Tashiro H."/>
            <person name="Tanigami A."/>
            <person name="Fujiwara T."/>
            <person name="Ono T."/>
            <person name="Yamada K."/>
            <person name="Fujii Y."/>
            <person name="Ozaki K."/>
            <person name="Hirao M."/>
            <person name="Ohmori Y."/>
            <person name="Kawabata A."/>
            <person name="Hikiji T."/>
            <person name="Kobatake N."/>
            <person name="Inagaki H."/>
            <person name="Ikema Y."/>
            <person name="Okamoto S."/>
            <person name="Okitani R."/>
            <person name="Kawakami T."/>
            <person name="Noguchi S."/>
            <person name="Itoh T."/>
            <person name="Shigeta K."/>
            <person name="Senba T."/>
            <person name="Matsumura K."/>
            <person name="Nakajima Y."/>
            <person name="Mizuno T."/>
            <person name="Morinaga M."/>
            <person name="Sasaki M."/>
            <person name="Togashi T."/>
            <person name="Oyama M."/>
            <person name="Hata H."/>
            <person name="Watanabe M."/>
            <person name="Komatsu T."/>
            <person name="Mizushima-Sugano J."/>
            <person name="Satoh T."/>
            <person name="Shirai Y."/>
            <person name="Takahashi Y."/>
            <person name="Nakagawa K."/>
            <person name="Okumura K."/>
            <person name="Nagase T."/>
            <person name="Nomura N."/>
            <person name="Kikuchi H."/>
            <person name="Masuho Y."/>
            <person name="Yamashita R."/>
            <person name="Nakai K."/>
            <person name="Yada T."/>
            <person name="Nakamura Y."/>
            <person name="Ohara O."/>
            <person name="Isogai T."/>
            <person name="Sugano S."/>
        </authorList>
    </citation>
    <scope>NUCLEOTIDE SEQUENCE [LARGE SCALE MRNA] (ISOFORMS 3 AND 4)</scope>
    <source>
        <tissue>Thymus</tissue>
    </source>
</reference>
<reference key="3">
    <citation type="submission" date="2005-04" db="EMBL/GenBank/DDBJ databases">
        <authorList>
            <person name="Suzuki Y."/>
            <person name="Sugano S."/>
            <person name="Totoki Y."/>
            <person name="Toyoda A."/>
            <person name="Takeda T."/>
            <person name="Sakaki Y."/>
            <person name="Tanaka A."/>
            <person name="Yokoyama S."/>
        </authorList>
    </citation>
    <scope>NUCLEOTIDE SEQUENCE [LARGE SCALE MRNA] (ISOFORM 1)</scope>
    <source>
        <tissue>Coronary artery</tissue>
    </source>
</reference>
<reference key="4">
    <citation type="journal article" date="2007" name="BMC Genomics">
        <title>The full-ORF clone resource of the German cDNA consortium.</title>
        <authorList>
            <person name="Bechtel S."/>
            <person name="Rosenfelder H."/>
            <person name="Duda A."/>
            <person name="Schmidt C.P."/>
            <person name="Ernst U."/>
            <person name="Wellenreuther R."/>
            <person name="Mehrle A."/>
            <person name="Schuster C."/>
            <person name="Bahr A."/>
            <person name="Bloecker H."/>
            <person name="Heubner D."/>
            <person name="Hoerlein A."/>
            <person name="Michel G."/>
            <person name="Wedler H."/>
            <person name="Koehrer K."/>
            <person name="Ottenwaelder B."/>
            <person name="Poustka A."/>
            <person name="Wiemann S."/>
            <person name="Schupp I."/>
        </authorList>
    </citation>
    <scope>NUCLEOTIDE SEQUENCE [LARGE SCALE MRNA] (ISOFORM 2)</scope>
    <source>
        <tissue>Testis</tissue>
    </source>
</reference>
<reference key="5">
    <citation type="journal article" date="2004" name="Nature">
        <title>The DNA sequence and comparative analysis of human chromosome 5.</title>
        <authorList>
            <person name="Schmutz J."/>
            <person name="Martin J."/>
            <person name="Terry A."/>
            <person name="Couronne O."/>
            <person name="Grimwood J."/>
            <person name="Lowry S."/>
            <person name="Gordon L.A."/>
            <person name="Scott D."/>
            <person name="Xie G."/>
            <person name="Huang W."/>
            <person name="Hellsten U."/>
            <person name="Tran-Gyamfi M."/>
            <person name="She X."/>
            <person name="Prabhakar S."/>
            <person name="Aerts A."/>
            <person name="Altherr M."/>
            <person name="Bajorek E."/>
            <person name="Black S."/>
            <person name="Branscomb E."/>
            <person name="Caoile C."/>
            <person name="Challacombe J.F."/>
            <person name="Chan Y.M."/>
            <person name="Denys M."/>
            <person name="Detter J.C."/>
            <person name="Escobar J."/>
            <person name="Flowers D."/>
            <person name="Fotopulos D."/>
            <person name="Glavina T."/>
            <person name="Gomez M."/>
            <person name="Gonzales E."/>
            <person name="Goodstein D."/>
            <person name="Grigoriev I."/>
            <person name="Groza M."/>
            <person name="Hammon N."/>
            <person name="Hawkins T."/>
            <person name="Haydu L."/>
            <person name="Israni S."/>
            <person name="Jett J."/>
            <person name="Kadner K."/>
            <person name="Kimball H."/>
            <person name="Kobayashi A."/>
            <person name="Lopez F."/>
            <person name="Lou Y."/>
            <person name="Martinez D."/>
            <person name="Medina C."/>
            <person name="Morgan J."/>
            <person name="Nandkeshwar R."/>
            <person name="Noonan J.P."/>
            <person name="Pitluck S."/>
            <person name="Pollard M."/>
            <person name="Predki P."/>
            <person name="Priest J."/>
            <person name="Ramirez L."/>
            <person name="Retterer J."/>
            <person name="Rodriguez A."/>
            <person name="Rogers S."/>
            <person name="Salamov A."/>
            <person name="Salazar A."/>
            <person name="Thayer N."/>
            <person name="Tice H."/>
            <person name="Tsai M."/>
            <person name="Ustaszewska A."/>
            <person name="Vo N."/>
            <person name="Wheeler J."/>
            <person name="Wu K."/>
            <person name="Yang J."/>
            <person name="Dickson M."/>
            <person name="Cheng J.-F."/>
            <person name="Eichler E.E."/>
            <person name="Olsen A."/>
            <person name="Pennacchio L.A."/>
            <person name="Rokhsar D.S."/>
            <person name="Richardson P."/>
            <person name="Lucas S.M."/>
            <person name="Myers R.M."/>
            <person name="Rubin E.M."/>
        </authorList>
    </citation>
    <scope>NUCLEOTIDE SEQUENCE [LARGE SCALE GENOMIC DNA]</scope>
</reference>
<reference key="6">
    <citation type="journal article" date="2004" name="Genome Res.">
        <title>The status, quality, and expansion of the NIH full-length cDNA project: the Mammalian Gene Collection (MGC).</title>
        <authorList>
            <consortium name="The MGC Project Team"/>
        </authorList>
    </citation>
    <scope>NUCLEOTIDE SEQUENCE [LARGE SCALE MRNA] (ISOFORM 1)</scope>
    <source>
        <tissue>Lung</tissue>
    </source>
</reference>
<keyword id="KW-0025">Alternative splicing</keyword>
<keyword id="KW-0238">DNA-binding</keyword>
<keyword id="KW-0539">Nucleus</keyword>
<keyword id="KW-1267">Proteomics identification</keyword>
<keyword id="KW-1185">Reference proteome</keyword>
<keyword id="KW-0678">Repressor</keyword>
<keyword id="KW-0804">Transcription</keyword>
<keyword id="KW-0805">Transcription regulation</keyword>